<proteinExistence type="inferred from homology"/>
<name>3MGH_RHIEC</name>
<organism>
    <name type="scientific">Rhizobium etli (strain ATCC 51251 / DSM 11541 / JCM 21823 / NBRC 15573 / CFN 42)</name>
    <dbReference type="NCBI Taxonomy" id="347834"/>
    <lineage>
        <taxon>Bacteria</taxon>
        <taxon>Pseudomonadati</taxon>
        <taxon>Pseudomonadota</taxon>
        <taxon>Alphaproteobacteria</taxon>
        <taxon>Hyphomicrobiales</taxon>
        <taxon>Rhizobiaceae</taxon>
        <taxon>Rhizobium/Agrobacterium group</taxon>
        <taxon>Rhizobium</taxon>
    </lineage>
</organism>
<sequence>MTDGGMTKDAIGAGALAGEGLRAFFERDAITVARDLLGCHLTVDGAGGRITETEAYFPDDEASHSFRGPTKRNGAMFGRPGNVYIYRIYGMYWCLNFVCHPGSAVLIRALEPETGIAAMMERRGTDMLTALCSGPGKLCQALGIDIEINDRLLDLPPYALTPSTPVPIVAGKRIGITRNAEAPWRFGIQGSRYLSKPFR</sequence>
<comment type="similarity">
    <text evidence="1">Belongs to the DNA glycosylase MPG family.</text>
</comment>
<dbReference type="EC" id="3.2.2.-" evidence="1"/>
<dbReference type="EMBL" id="CP000133">
    <property type="protein sequence ID" value="ABC92118.1"/>
    <property type="molecule type" value="Genomic_DNA"/>
</dbReference>
<dbReference type="SMR" id="Q2K4W8"/>
<dbReference type="KEGG" id="ret:RHE_CH03355"/>
<dbReference type="eggNOG" id="COG2094">
    <property type="taxonomic scope" value="Bacteria"/>
</dbReference>
<dbReference type="HOGENOM" id="CLU_060471_4_1_5"/>
<dbReference type="Proteomes" id="UP000001936">
    <property type="component" value="Chromosome"/>
</dbReference>
<dbReference type="GO" id="GO:0003905">
    <property type="term" value="F:alkylbase DNA N-glycosylase activity"/>
    <property type="evidence" value="ECO:0007669"/>
    <property type="project" value="InterPro"/>
</dbReference>
<dbReference type="GO" id="GO:0003677">
    <property type="term" value="F:DNA binding"/>
    <property type="evidence" value="ECO:0007669"/>
    <property type="project" value="InterPro"/>
</dbReference>
<dbReference type="GO" id="GO:0006284">
    <property type="term" value="P:base-excision repair"/>
    <property type="evidence" value="ECO:0007669"/>
    <property type="project" value="InterPro"/>
</dbReference>
<dbReference type="CDD" id="cd00540">
    <property type="entry name" value="AAG"/>
    <property type="match status" value="1"/>
</dbReference>
<dbReference type="FunFam" id="3.10.300.10:FF:000001">
    <property type="entry name" value="Putative 3-methyladenine DNA glycosylase"/>
    <property type="match status" value="1"/>
</dbReference>
<dbReference type="Gene3D" id="3.10.300.10">
    <property type="entry name" value="Methylpurine-DNA glycosylase (MPG)"/>
    <property type="match status" value="1"/>
</dbReference>
<dbReference type="HAMAP" id="MF_00527">
    <property type="entry name" value="3MGH"/>
    <property type="match status" value="1"/>
</dbReference>
<dbReference type="InterPro" id="IPR011034">
    <property type="entry name" value="Formyl_transferase-like_C_sf"/>
</dbReference>
<dbReference type="InterPro" id="IPR003180">
    <property type="entry name" value="MPG"/>
</dbReference>
<dbReference type="InterPro" id="IPR036995">
    <property type="entry name" value="MPG_sf"/>
</dbReference>
<dbReference type="NCBIfam" id="TIGR00567">
    <property type="entry name" value="3mg"/>
    <property type="match status" value="1"/>
</dbReference>
<dbReference type="NCBIfam" id="NF002003">
    <property type="entry name" value="PRK00802.1-3"/>
    <property type="match status" value="1"/>
</dbReference>
<dbReference type="PANTHER" id="PTHR10429">
    <property type="entry name" value="DNA-3-METHYLADENINE GLYCOSYLASE"/>
    <property type="match status" value="1"/>
</dbReference>
<dbReference type="PANTHER" id="PTHR10429:SF0">
    <property type="entry name" value="DNA-3-METHYLADENINE GLYCOSYLASE"/>
    <property type="match status" value="1"/>
</dbReference>
<dbReference type="Pfam" id="PF02245">
    <property type="entry name" value="Pur_DNA_glyco"/>
    <property type="match status" value="1"/>
</dbReference>
<dbReference type="SUPFAM" id="SSF50486">
    <property type="entry name" value="FMT C-terminal domain-like"/>
    <property type="match status" value="1"/>
</dbReference>
<reference key="1">
    <citation type="journal article" date="2006" name="Proc. Natl. Acad. Sci. U.S.A.">
        <title>The partitioned Rhizobium etli genome: genetic and metabolic redundancy in seven interacting replicons.</title>
        <authorList>
            <person name="Gonzalez V."/>
            <person name="Santamaria R.I."/>
            <person name="Bustos P."/>
            <person name="Hernandez-Gonzalez I."/>
            <person name="Medrano-Soto A."/>
            <person name="Moreno-Hagelsieb G."/>
            <person name="Janga S.C."/>
            <person name="Ramirez M.A."/>
            <person name="Jimenez-Jacinto V."/>
            <person name="Collado-Vides J."/>
            <person name="Davila G."/>
        </authorList>
    </citation>
    <scope>NUCLEOTIDE SEQUENCE [LARGE SCALE GENOMIC DNA]</scope>
    <source>
        <strain>ATCC 51251 / DSM 11541 / JCM 21823 / NBRC 15573 / CFN 42</strain>
    </source>
</reference>
<gene>
    <name type="ordered locus">RHE_CH03355</name>
</gene>
<accession>Q2K4W8</accession>
<keyword id="KW-0227">DNA damage</keyword>
<keyword id="KW-0234">DNA repair</keyword>
<keyword id="KW-0378">Hydrolase</keyword>
<keyword id="KW-1185">Reference proteome</keyword>
<evidence type="ECO:0000255" key="1">
    <source>
        <dbReference type="HAMAP-Rule" id="MF_00527"/>
    </source>
</evidence>
<feature type="chain" id="PRO_0000265046" description="Putative 3-methyladenine DNA glycosylase">
    <location>
        <begin position="1"/>
        <end position="199"/>
    </location>
</feature>
<protein>
    <recommendedName>
        <fullName evidence="1">Putative 3-methyladenine DNA glycosylase</fullName>
        <ecNumber evidence="1">3.2.2.-</ecNumber>
    </recommendedName>
</protein>